<accession>Q2S304</accession>
<evidence type="ECO:0000255" key="1">
    <source>
        <dbReference type="HAMAP-Rule" id="MF_00226"/>
    </source>
</evidence>
<protein>
    <recommendedName>
        <fullName evidence="1">CinA-like protein</fullName>
    </recommendedName>
</protein>
<reference key="1">
    <citation type="journal article" date="2005" name="Proc. Natl. Acad. Sci. U.S.A.">
        <title>The genome of Salinibacter ruber: convergence and gene exchange among hyperhalophilic bacteria and archaea.</title>
        <authorList>
            <person name="Mongodin E.F."/>
            <person name="Nelson K.E."/>
            <person name="Daugherty S."/>
            <person name="DeBoy R.T."/>
            <person name="Wister J."/>
            <person name="Khouri H."/>
            <person name="Weidman J."/>
            <person name="Walsh D.A."/>
            <person name="Papke R.T."/>
            <person name="Sanchez Perez G."/>
            <person name="Sharma A.K."/>
            <person name="Nesbo C.L."/>
            <person name="MacLeod D."/>
            <person name="Bapteste E."/>
            <person name="Doolittle W.F."/>
            <person name="Charlebois R.L."/>
            <person name="Legault B."/>
            <person name="Rodriguez-Valera F."/>
        </authorList>
    </citation>
    <scope>NUCLEOTIDE SEQUENCE [LARGE SCALE GENOMIC DNA]</scope>
    <source>
        <strain>DSM 13855 / CECT 5946 / M31</strain>
    </source>
</reference>
<gene>
    <name type="ordered locus">SRU_1303</name>
</gene>
<keyword id="KW-1185">Reference proteome</keyword>
<comment type="similarity">
    <text evidence="1">Belongs to the CinA family.</text>
</comment>
<dbReference type="EMBL" id="CP000159">
    <property type="protein sequence ID" value="ABC43768.1"/>
    <property type="molecule type" value="Genomic_DNA"/>
</dbReference>
<dbReference type="RefSeq" id="WP_011404055.1">
    <property type="nucleotide sequence ID" value="NC_007677.1"/>
</dbReference>
<dbReference type="RefSeq" id="YP_445427.1">
    <property type="nucleotide sequence ID" value="NC_007677.1"/>
</dbReference>
<dbReference type="SMR" id="Q2S304"/>
<dbReference type="STRING" id="309807.SRU_1303"/>
<dbReference type="EnsemblBacteria" id="ABC43768">
    <property type="protein sequence ID" value="ABC43768"/>
    <property type="gene ID" value="SRU_1303"/>
</dbReference>
<dbReference type="GeneID" id="83728217"/>
<dbReference type="KEGG" id="sru:SRU_1303"/>
<dbReference type="PATRIC" id="fig|309807.25.peg.1354"/>
<dbReference type="eggNOG" id="COG1058">
    <property type="taxonomic scope" value="Bacteria"/>
</dbReference>
<dbReference type="eggNOG" id="COG1546">
    <property type="taxonomic scope" value="Bacteria"/>
</dbReference>
<dbReference type="HOGENOM" id="CLU_030805_9_3_10"/>
<dbReference type="OrthoDB" id="9801454at2"/>
<dbReference type="Proteomes" id="UP000008674">
    <property type="component" value="Chromosome"/>
</dbReference>
<dbReference type="CDD" id="cd00885">
    <property type="entry name" value="cinA"/>
    <property type="match status" value="1"/>
</dbReference>
<dbReference type="Gene3D" id="3.30.70.2860">
    <property type="match status" value="1"/>
</dbReference>
<dbReference type="Gene3D" id="3.90.950.20">
    <property type="entry name" value="CinA-like"/>
    <property type="match status" value="1"/>
</dbReference>
<dbReference type="Gene3D" id="3.40.980.10">
    <property type="entry name" value="MoaB/Mog-like domain"/>
    <property type="match status" value="1"/>
</dbReference>
<dbReference type="HAMAP" id="MF_00226_B">
    <property type="entry name" value="CinA_B"/>
    <property type="match status" value="1"/>
</dbReference>
<dbReference type="InterPro" id="IPR050101">
    <property type="entry name" value="CinA"/>
</dbReference>
<dbReference type="InterPro" id="IPR036653">
    <property type="entry name" value="CinA-like_C"/>
</dbReference>
<dbReference type="InterPro" id="IPR008136">
    <property type="entry name" value="CinA_C"/>
</dbReference>
<dbReference type="InterPro" id="IPR041424">
    <property type="entry name" value="CinA_KH"/>
</dbReference>
<dbReference type="InterPro" id="IPR008135">
    <property type="entry name" value="Competence-induced_CinA"/>
</dbReference>
<dbReference type="InterPro" id="IPR036425">
    <property type="entry name" value="MoaB/Mog-like_dom_sf"/>
</dbReference>
<dbReference type="InterPro" id="IPR001453">
    <property type="entry name" value="MoaB/Mog_dom"/>
</dbReference>
<dbReference type="NCBIfam" id="TIGR00200">
    <property type="entry name" value="cinA_nterm"/>
    <property type="match status" value="1"/>
</dbReference>
<dbReference type="NCBIfam" id="TIGR00199">
    <property type="entry name" value="PncC_domain"/>
    <property type="match status" value="1"/>
</dbReference>
<dbReference type="NCBIfam" id="NF001813">
    <property type="entry name" value="PRK00549.1"/>
    <property type="match status" value="1"/>
</dbReference>
<dbReference type="PANTHER" id="PTHR13939">
    <property type="entry name" value="NICOTINAMIDE-NUCLEOTIDE AMIDOHYDROLASE PNCC"/>
    <property type="match status" value="1"/>
</dbReference>
<dbReference type="PANTHER" id="PTHR13939:SF0">
    <property type="entry name" value="NMN AMIDOHYDROLASE-LIKE PROTEIN YFAY"/>
    <property type="match status" value="1"/>
</dbReference>
<dbReference type="Pfam" id="PF02464">
    <property type="entry name" value="CinA"/>
    <property type="match status" value="1"/>
</dbReference>
<dbReference type="Pfam" id="PF18146">
    <property type="entry name" value="CinA_KH"/>
    <property type="match status" value="1"/>
</dbReference>
<dbReference type="Pfam" id="PF00994">
    <property type="entry name" value="MoCF_biosynth"/>
    <property type="match status" value="1"/>
</dbReference>
<dbReference type="PIRSF" id="PIRSF006728">
    <property type="entry name" value="CinA"/>
    <property type="match status" value="1"/>
</dbReference>
<dbReference type="SMART" id="SM00852">
    <property type="entry name" value="MoCF_biosynth"/>
    <property type="match status" value="1"/>
</dbReference>
<dbReference type="SUPFAM" id="SSF142433">
    <property type="entry name" value="CinA-like"/>
    <property type="match status" value="1"/>
</dbReference>
<dbReference type="SUPFAM" id="SSF53218">
    <property type="entry name" value="Molybdenum cofactor biosynthesis proteins"/>
    <property type="match status" value="1"/>
</dbReference>
<feature type="chain" id="PRO_1000058723" description="CinA-like protein">
    <location>
        <begin position="1"/>
        <end position="412"/>
    </location>
</feature>
<sequence length="412" mass="43687">MKAQLLTIGDELLIGQTTNTNAAWLGGRLSRLGVRMTRTVTVGDAREAIFRELDRAYEEARLVICTGGLGPTHDDLTRTVIADYFGAPLQTDPDVLERVRQYYDRRNRDVPPSAPALAQRPEGFETLDNPVGAAVGLWHEAPDGRLIVLLPGIPEEMTAIFEASVQPRLEEQSGVGEVRHRTLVTAGIGETALQEKLGDLSDVLGDDVSLAYLPSTSGVRLRLSADARQTTAGARLDTVEAAIRERAGDDIIGTGDVTLEAVLGDALRARDATIASAESATGGLIGHRLTGVSGSSDYYLGSVVAYANSAKKTVLGVDEAAIREHGAVSEAVAVQMAEGVREALGTTVGVSTTGIAGPTGGTPDKPVGTVWVGYADASERHARRHQFVEDRTLNKELFASAALEEARRTLSV</sequence>
<organism>
    <name type="scientific">Salinibacter ruber (strain DSM 13855 / M31)</name>
    <dbReference type="NCBI Taxonomy" id="309807"/>
    <lineage>
        <taxon>Bacteria</taxon>
        <taxon>Pseudomonadati</taxon>
        <taxon>Rhodothermota</taxon>
        <taxon>Rhodothermia</taxon>
        <taxon>Rhodothermales</taxon>
        <taxon>Salinibacteraceae</taxon>
        <taxon>Salinibacter</taxon>
    </lineage>
</organism>
<proteinExistence type="inferred from homology"/>
<name>CINAL_SALRD</name>